<evidence type="ECO:0000255" key="1">
    <source>
        <dbReference type="HAMAP-Rule" id="MF_04136"/>
    </source>
</evidence>
<evidence type="ECO:0000269" key="2">
    <source>
    </source>
</evidence>
<evidence type="ECO:0000303" key="3">
    <source>
    </source>
</evidence>
<evidence type="ECO:0000305" key="4"/>
<evidence type="ECO:0000305" key="5">
    <source>
    </source>
</evidence>
<dbReference type="EC" id="3.2.1.17" evidence="1 2"/>
<dbReference type="EMBL" id="AJ505558">
    <property type="protein sequence ID" value="CAD44236.1"/>
    <property type="molecule type" value="Genomic_DNA"/>
</dbReference>
<dbReference type="SMR" id="Q7Y2C0"/>
<dbReference type="CAZy" id="GH24">
    <property type="family name" value="Glycoside Hydrolase Family 24"/>
</dbReference>
<dbReference type="KEGG" id="vg:1482618"/>
<dbReference type="OrthoDB" id="18172at10239"/>
<dbReference type="Proteomes" id="UP000000842">
    <property type="component" value="Genome"/>
</dbReference>
<dbReference type="GO" id="GO:0020002">
    <property type="term" value="C:host cell plasma membrane"/>
    <property type="evidence" value="ECO:0007669"/>
    <property type="project" value="UniProtKB-SubCell"/>
</dbReference>
<dbReference type="GO" id="GO:0016020">
    <property type="term" value="C:membrane"/>
    <property type="evidence" value="ECO:0007669"/>
    <property type="project" value="UniProtKB-KW"/>
</dbReference>
<dbReference type="GO" id="GO:0003796">
    <property type="term" value="F:lysozyme activity"/>
    <property type="evidence" value="ECO:0007669"/>
    <property type="project" value="UniProtKB-EC"/>
</dbReference>
<dbReference type="GO" id="GO:0016998">
    <property type="term" value="P:cell wall macromolecule catabolic process"/>
    <property type="evidence" value="ECO:0007669"/>
    <property type="project" value="InterPro"/>
</dbReference>
<dbReference type="GO" id="GO:0042742">
    <property type="term" value="P:defense response to bacterium"/>
    <property type="evidence" value="ECO:0007669"/>
    <property type="project" value="UniProtKB-KW"/>
</dbReference>
<dbReference type="GO" id="GO:0031640">
    <property type="term" value="P:killing of cells of another organism"/>
    <property type="evidence" value="ECO:0007669"/>
    <property type="project" value="UniProtKB-KW"/>
</dbReference>
<dbReference type="GO" id="GO:0009253">
    <property type="term" value="P:peptidoglycan catabolic process"/>
    <property type="evidence" value="ECO:0007669"/>
    <property type="project" value="InterPro"/>
</dbReference>
<dbReference type="CDD" id="cd16900">
    <property type="entry name" value="endolysin_R21-like"/>
    <property type="match status" value="1"/>
</dbReference>
<dbReference type="Gene3D" id="1.10.530.40">
    <property type="match status" value="1"/>
</dbReference>
<dbReference type="HAMAP" id="MF_04110">
    <property type="entry name" value="ENDOLYSIN_T4"/>
    <property type="match status" value="1"/>
</dbReference>
<dbReference type="HAMAP" id="MF_04136">
    <property type="entry name" value="SAR_ENDOLYSIN"/>
    <property type="match status" value="1"/>
</dbReference>
<dbReference type="InterPro" id="IPR051018">
    <property type="entry name" value="Bacteriophage_GH24"/>
</dbReference>
<dbReference type="InterPro" id="IPR034690">
    <property type="entry name" value="Endolysin_T4_type"/>
</dbReference>
<dbReference type="InterPro" id="IPR002196">
    <property type="entry name" value="Glyco_hydro_24"/>
</dbReference>
<dbReference type="InterPro" id="IPR023346">
    <property type="entry name" value="Lysozyme-like_dom_sf"/>
</dbReference>
<dbReference type="InterPro" id="IPR023347">
    <property type="entry name" value="Lysozyme_dom_sf"/>
</dbReference>
<dbReference type="InterPro" id="IPR043688">
    <property type="entry name" value="SAR_endolysin-like"/>
</dbReference>
<dbReference type="PANTHER" id="PTHR38107">
    <property type="match status" value="1"/>
</dbReference>
<dbReference type="PANTHER" id="PTHR38107:SF3">
    <property type="entry name" value="LYSOZYME RRRD-RELATED"/>
    <property type="match status" value="1"/>
</dbReference>
<dbReference type="Pfam" id="PF00959">
    <property type="entry name" value="Phage_lysozyme"/>
    <property type="match status" value="1"/>
</dbReference>
<dbReference type="SUPFAM" id="SSF53955">
    <property type="entry name" value="Lysozyme-like"/>
    <property type="match status" value="1"/>
</dbReference>
<reference key="1">
    <citation type="journal article" date="2003" name="Virology">
        <title>The genome of bacteriophage phiKMV, a T7-like virus infecting Pseudomonas aeruginosa.</title>
        <authorList>
            <person name="Lavigne R."/>
            <person name="Burkal'tseva M.V."/>
            <person name="Robben J."/>
            <person name="Sykilinda N.N."/>
            <person name="Kurochkina L.P."/>
            <person name="Grymonprez B."/>
            <person name="Jonckx B."/>
            <person name="Krylov V.N."/>
            <person name="Mesyanzhinov V.V."/>
            <person name="Volckaert G."/>
        </authorList>
    </citation>
    <scope>NUCLEOTIDE SEQUENCE [GENOMIC DNA]</scope>
</reference>
<reference key="2">
    <citation type="journal article" date="2004" name="Cell. Mol. Life Sci.">
        <title>Identification and characterization of a highly thermostable bacteriophage lysozyme.</title>
        <authorList>
            <person name="Lavigne R."/>
            <person name="Briers Y."/>
            <person name="Hertveldt K."/>
            <person name="Robben J."/>
            <person name="Volckaert G."/>
        </authorList>
    </citation>
    <scope>NUCLEOTIDE SEQUENCE [GENOMIC DNA]</scope>
</reference>
<reference key="3">
    <citation type="journal article" date="2011" name="Bacteriophage">
        <title>The lysis cassette of bacteriophage varphiKMV encodes a signal-arrest-release endolysin and a pinholin.</title>
        <authorList>
            <person name="Briers Y."/>
            <person name="Peeters L.M."/>
            <person name="Volckaert G."/>
            <person name="Lavigne R."/>
        </authorList>
    </citation>
    <scope>CHARACTERIZATION</scope>
    <scope>FUNCTION</scope>
    <scope>CATALYTIC ACTIVITY</scope>
</reference>
<keyword id="KW-0929">Antimicrobial</keyword>
<keyword id="KW-0081">Bacteriolytic enzyme</keyword>
<keyword id="KW-0204">Cytolysis</keyword>
<keyword id="KW-0326">Glycosidase</keyword>
<keyword id="KW-1030">Host cell inner membrane</keyword>
<keyword id="KW-0578">Host cell lysis by virus</keyword>
<keyword id="KW-1032">Host cell membrane</keyword>
<keyword id="KW-1043">Host membrane</keyword>
<keyword id="KW-0378">Hydrolase</keyword>
<keyword id="KW-0472">Membrane</keyword>
<keyword id="KW-1185">Reference proteome</keyword>
<keyword id="KW-0735">Signal-anchor</keyword>
<keyword id="KW-0812">Transmembrane</keyword>
<keyword id="KW-1133">Transmembrane helix</keyword>
<keyword id="KW-1188">Viral release from host cell</keyword>
<accession>Q7Y2C0</accession>
<comment type="function">
    <text evidence="1 5">Signal-arrest-release (SAR) endolysin with lysozyme activity that degrades host peptidoglycans and participates with the pinholin and spanin proteins in the sequential events which lead to programmed host cell lysis releasing the mature viral particles. Once the pinholin has permeabilized the host cell membrane, the SAR-endolysin is released into the periplasm where it breaks down the peptidoglycan layer.</text>
</comment>
<comment type="catalytic activity">
    <reaction evidence="1 2">
        <text>Hydrolysis of (1-&gt;4)-beta-linkages between N-acetylmuramic acid and N-acetyl-D-glucosamine residues in a peptidoglycan and between N-acetyl-D-glucosamine residues in chitodextrins.</text>
        <dbReference type="EC" id="3.2.1.17"/>
    </reaction>
</comment>
<comment type="subcellular location">
    <subcellularLocation>
        <location evidence="1">Host cell inner membrane</location>
        <topology evidence="1">Single-pass type II membrane protein</topology>
        <orientation evidence="1">Periplasmic side</orientation>
    </subcellularLocation>
    <text evidence="1 2">Secreted as a signal-anchored, membrane-tethered, inactive endolysin which is subsequently refolded, activated and released by membrane depolarization driven by the pinholin.</text>
</comment>
<comment type="domain">
    <text evidence="1 2">The signal-anchor, which may also be an uncleaved signal sequence tethers the SAR-endolysin to the membrane until the latter is depolarized by the holin, resulting in the escape of SAR-endolysin from the membrane.</text>
</comment>
<comment type="similarity">
    <text evidence="1">Belongs to the glycosyl hydrolase 24 family.</text>
</comment>
<gene>
    <name type="primary">45</name>
</gene>
<organism>
    <name type="scientific">Pseudomonas phage phiKMV</name>
    <dbReference type="NCBI Taxonomy" id="204270"/>
    <lineage>
        <taxon>Viruses</taxon>
        <taxon>Duplodnaviria</taxon>
        <taxon>Heunggongvirae</taxon>
        <taxon>Uroviricota</taxon>
        <taxon>Caudoviricetes</taxon>
        <taxon>Autographiviridae</taxon>
        <taxon>Krylovirinae</taxon>
        <taxon>Phikmvvirus</taxon>
        <taxon>Phikmvvirus phiKMV</taxon>
    </lineage>
</organism>
<feature type="chain" id="PRO_0000429256" description="SAR-endolysin">
    <location>
        <begin position="1"/>
        <end position="160"/>
    </location>
</feature>
<feature type="transmembrane region" description="Helical; Signal-anchor for type II membrane protein" evidence="1">
    <location>
        <begin position="1"/>
        <end position="19"/>
    </location>
</feature>
<feature type="topological domain" description="Periplasmic" evidence="5">
    <location>
        <begin position="20"/>
        <end position="160"/>
    </location>
</feature>
<feature type="active site" description="Proton donor/acceptor" evidence="1">
    <location>
        <position position="21"/>
    </location>
</feature>
<feature type="active site" description="Proton donor/acceptor" evidence="1">
    <location>
        <position position="30"/>
    </location>
</feature>
<organismHost>
    <name type="scientific">Pseudomonas aeruginosa</name>
    <dbReference type="NCBI Taxonomy" id="287"/>
</organismHost>
<protein>
    <recommendedName>
        <fullName evidence="1 3">SAR-endolysin</fullName>
        <ecNumber evidence="1 2">3.2.1.17</ecNumber>
    </recommendedName>
    <alternativeName>
        <fullName evidence="1">Endolysin</fullName>
    </alternativeName>
    <alternativeName>
        <fullName>Gene product 45</fullName>
        <shortName>gp45</shortName>
    </alternativeName>
    <alternativeName>
        <fullName evidence="3">KMV45</fullName>
    </alternativeName>
    <alternativeName>
        <fullName evidence="1 4">Lysis protein</fullName>
    </alternativeName>
    <alternativeName>
        <fullName evidence="1">Lysozyme</fullName>
    </alternativeName>
    <alternativeName>
        <fullName evidence="1 3">Muramidase</fullName>
    </alternativeName>
</protein>
<proteinExistence type="evidence at protein level"/>
<sequence>MNKPLRGAALAAALAGLVALEGSETTAYRDIAGVPTICSGTTAGVKMGDKATPEQCYQMTIKDFQRFERIVLDAIKVPLNVNEQTALTFFCYNVGPVCTTSTAFKRFNQGRATEGCQALAMWNKVTINGQKVVSKGLVNRRNAEIKQCLEPSSQYSSLLW</sequence>
<name>ENLYS_BPKMV</name>